<keyword id="KW-0106">Calcium</keyword>
<keyword id="KW-0963">Cytoplasm</keyword>
<keyword id="KW-0378">Hydrolase</keyword>
<keyword id="KW-0479">Metal-binding</keyword>
<keyword id="KW-1185">Reference proteome</keyword>
<keyword id="KW-0862">Zinc</keyword>
<accession>Q2PFX5</accession>
<feature type="chain" id="PRO_0000250476" description="Regucalcin">
    <location>
        <begin position="1"/>
        <end position="299"/>
    </location>
</feature>
<feature type="active site" description="Proton donor/acceptor" evidence="1">
    <location>
        <position position="204"/>
    </location>
</feature>
<feature type="binding site" evidence="1">
    <location>
        <position position="18"/>
    </location>
    <ligand>
        <name>a divalent metal cation</name>
        <dbReference type="ChEBI" id="CHEBI:60240"/>
    </ligand>
</feature>
<feature type="binding site" evidence="1">
    <location>
        <position position="101"/>
    </location>
    <ligand>
        <name>substrate</name>
    </ligand>
</feature>
<feature type="binding site" evidence="1">
    <location>
        <position position="103"/>
    </location>
    <ligand>
        <name>substrate</name>
    </ligand>
</feature>
<feature type="binding site" evidence="1">
    <location>
        <position position="121"/>
    </location>
    <ligand>
        <name>substrate</name>
    </ligand>
</feature>
<feature type="binding site" evidence="1">
    <location>
        <position position="154"/>
    </location>
    <ligand>
        <name>a divalent metal cation</name>
        <dbReference type="ChEBI" id="CHEBI:60240"/>
    </ligand>
</feature>
<feature type="binding site" evidence="1">
    <location>
        <position position="204"/>
    </location>
    <ligand>
        <name>a divalent metal cation</name>
        <dbReference type="ChEBI" id="CHEBI:60240"/>
    </ligand>
</feature>
<feature type="modified residue" description="N6-succinyllysine" evidence="2">
    <location>
        <position position="144"/>
    </location>
</feature>
<feature type="modified residue" description="N6-succinyllysine" evidence="2">
    <location>
        <position position="244"/>
    </location>
</feature>
<feature type="modified residue" description="N6-succinyllysine" evidence="2">
    <location>
        <position position="253"/>
    </location>
</feature>
<dbReference type="EC" id="3.1.1.17"/>
<dbReference type="EMBL" id="AB220462">
    <property type="protein sequence ID" value="BAE72995.1"/>
    <property type="molecule type" value="mRNA"/>
</dbReference>
<dbReference type="RefSeq" id="NP_001306498.1">
    <property type="nucleotide sequence ID" value="NM_001319569.1"/>
</dbReference>
<dbReference type="SMR" id="Q2PFX5"/>
<dbReference type="STRING" id="9541.ENSMFAP00000039265"/>
<dbReference type="eggNOG" id="KOG4499">
    <property type="taxonomic scope" value="Eukaryota"/>
</dbReference>
<dbReference type="Proteomes" id="UP000233100">
    <property type="component" value="Unplaced"/>
</dbReference>
<dbReference type="GO" id="GO:0005737">
    <property type="term" value="C:cytoplasm"/>
    <property type="evidence" value="ECO:0000250"/>
    <property type="project" value="UniProtKB"/>
</dbReference>
<dbReference type="GO" id="GO:0005634">
    <property type="term" value="C:nucleus"/>
    <property type="evidence" value="ECO:0000250"/>
    <property type="project" value="UniProtKB"/>
</dbReference>
<dbReference type="GO" id="GO:0005509">
    <property type="term" value="F:calcium ion binding"/>
    <property type="evidence" value="ECO:0000250"/>
    <property type="project" value="UniProtKB"/>
</dbReference>
<dbReference type="GO" id="GO:0030234">
    <property type="term" value="F:enzyme regulator activity"/>
    <property type="evidence" value="ECO:0007669"/>
    <property type="project" value="InterPro"/>
</dbReference>
<dbReference type="GO" id="GO:0004341">
    <property type="term" value="F:gluconolactonase activity"/>
    <property type="evidence" value="ECO:0000250"/>
    <property type="project" value="UniProtKB"/>
</dbReference>
<dbReference type="GO" id="GO:0008270">
    <property type="term" value="F:zinc ion binding"/>
    <property type="evidence" value="ECO:0000250"/>
    <property type="project" value="UniProtKB"/>
</dbReference>
<dbReference type="GO" id="GO:0006874">
    <property type="term" value="P:intracellular calcium ion homeostasis"/>
    <property type="evidence" value="ECO:0000250"/>
    <property type="project" value="UniProtKB"/>
</dbReference>
<dbReference type="GO" id="GO:0019853">
    <property type="term" value="P:L-ascorbic acid biosynthetic process"/>
    <property type="evidence" value="ECO:0007669"/>
    <property type="project" value="TreeGrafter"/>
</dbReference>
<dbReference type="GO" id="GO:0032781">
    <property type="term" value="P:positive regulation of ATP-dependent activity"/>
    <property type="evidence" value="ECO:0000250"/>
    <property type="project" value="UniProtKB"/>
</dbReference>
<dbReference type="GO" id="GO:0050848">
    <property type="term" value="P:regulation of calcium-mediated signaling"/>
    <property type="evidence" value="ECO:0000250"/>
    <property type="project" value="UniProtKB"/>
</dbReference>
<dbReference type="FunFam" id="2.120.10.30:FF:000027">
    <property type="entry name" value="Regucalcin homologue"/>
    <property type="match status" value="1"/>
</dbReference>
<dbReference type="Gene3D" id="2.120.10.30">
    <property type="entry name" value="TolB, C-terminal domain"/>
    <property type="match status" value="1"/>
</dbReference>
<dbReference type="InterPro" id="IPR011042">
    <property type="entry name" value="6-blade_b-propeller_TolB-like"/>
</dbReference>
<dbReference type="InterPro" id="IPR008367">
    <property type="entry name" value="Regucalcin"/>
</dbReference>
<dbReference type="InterPro" id="IPR013658">
    <property type="entry name" value="SGL"/>
</dbReference>
<dbReference type="InterPro" id="IPR005511">
    <property type="entry name" value="SMP-30"/>
</dbReference>
<dbReference type="PANTHER" id="PTHR10907">
    <property type="entry name" value="REGUCALCIN"/>
    <property type="match status" value="1"/>
</dbReference>
<dbReference type="PANTHER" id="PTHR10907:SF54">
    <property type="entry name" value="REGUCALCIN"/>
    <property type="match status" value="1"/>
</dbReference>
<dbReference type="Pfam" id="PF08450">
    <property type="entry name" value="SGL"/>
    <property type="match status" value="1"/>
</dbReference>
<dbReference type="PRINTS" id="PR01791">
    <property type="entry name" value="REGUCALCIN"/>
</dbReference>
<dbReference type="PRINTS" id="PR01790">
    <property type="entry name" value="SMP30FAMILY"/>
</dbReference>
<dbReference type="SUPFAM" id="SSF63829">
    <property type="entry name" value="Calcium-dependent phosphotriesterase"/>
    <property type="match status" value="1"/>
</dbReference>
<comment type="function">
    <text evidence="1">Gluconolactonase with low activity towards other sugar lactones, including gulonolactone and galactonolactone. Can also hydrolyze diisopropyl phosphorofluoridate and phenylacetate (in vitro). Calcium-binding protein. Modulates Ca(2+) signaling, and Ca(2+)-dependent cellular processes and enzyme activities (By similarity).</text>
</comment>
<comment type="catalytic activity">
    <reaction>
        <text>D-glucono-1,5-lactone + H2O = D-gluconate + H(+)</text>
        <dbReference type="Rhea" id="RHEA:10440"/>
        <dbReference type="ChEBI" id="CHEBI:15377"/>
        <dbReference type="ChEBI" id="CHEBI:15378"/>
        <dbReference type="ChEBI" id="CHEBI:16217"/>
        <dbReference type="ChEBI" id="CHEBI:18391"/>
        <dbReference type="EC" id="3.1.1.17"/>
    </reaction>
</comment>
<comment type="cofactor">
    <cofactor evidence="1">
        <name>Zn(2+)</name>
        <dbReference type="ChEBI" id="CHEBI:29105"/>
    </cofactor>
    <cofactor evidence="1">
        <name>Mn(2+)</name>
        <dbReference type="ChEBI" id="CHEBI:29035"/>
    </cofactor>
    <cofactor evidence="1">
        <name>Ca(2+)</name>
        <dbReference type="ChEBI" id="CHEBI:29108"/>
    </cofactor>
    <cofactor evidence="1">
        <name>Mg(2+)</name>
        <dbReference type="ChEBI" id="CHEBI:18420"/>
    </cofactor>
    <text evidence="1">Binds 1 divalent metal cation per subunit. Most active with Zn(2+) and Mn(2+) ions. The physiological cofactor is most likely Ca(2+) or Mg(2+).</text>
</comment>
<comment type="subunit">
    <text evidence="1">Monomer.</text>
</comment>
<comment type="subcellular location">
    <subcellularLocation>
        <location evidence="1">Cytoplasm</location>
    </subcellularLocation>
</comment>
<comment type="similarity">
    <text evidence="3">Belongs to the SMP-30/CGR1 family.</text>
</comment>
<comment type="caution">
    <text evidence="3">Gluconolactonase catalyzes a key step in ascorbic acid (vitamin C) biosynthesis, but primates lack the last enzyme in the pathway and are unable to synthesize vitamin C.</text>
</comment>
<sequence length="299" mass="33223">MSSIKIECVLPENCRCGESPVWEEASDSLLFVDIPAKKLCRWDSLTKQVQRVTMDAPVSSVALRQSGGYVATIGTKFCALNWEEQSAVVLATVDNDKKNNRFNDGKVDPAGRYFAGTMAEETAPAVLERHQGSLYSLFPDHHVKKYFDQVDISNGLDWSLDHKIFYYIDSLSYSVDAFDYDLQTGQISNRRSVYKLEKEEQIPDGMCIDAEGKLWVACYNGGRVIRLDPVTGKRLQTVKLPVDKTTSCCFGGKNYSEMYVTCARDGMDPEGLLRQPEAGGIFKITGLGVKGIAPYSYAG</sequence>
<evidence type="ECO:0000250" key="1"/>
<evidence type="ECO:0000250" key="2">
    <source>
        <dbReference type="UniProtKB" id="Q64374"/>
    </source>
</evidence>
<evidence type="ECO:0000305" key="3"/>
<proteinExistence type="evidence at transcript level"/>
<reference key="1">
    <citation type="submission" date="2005-07" db="EMBL/GenBank/DDBJ databases">
        <title>Analysis of gene expression in cynomolgus monkey tissues by macaque cDNA oligo-chips.</title>
        <authorList>
            <person name="Kobayashi M."/>
            <person name="Tanuma R."/>
            <person name="Hirata M."/>
            <person name="Osada N."/>
            <person name="Kusuda J."/>
            <person name="Sugano S."/>
            <person name="Hashimoto K."/>
        </authorList>
    </citation>
    <scope>NUCLEOTIDE SEQUENCE [LARGE SCALE MRNA]</scope>
    <source>
        <tissue>Frontal cortex</tissue>
    </source>
</reference>
<gene>
    <name type="primary">RGN</name>
    <name type="synonym">SMP30</name>
    <name type="ORF">QflA-14884</name>
</gene>
<organism>
    <name type="scientific">Macaca fascicularis</name>
    <name type="common">Crab-eating macaque</name>
    <name type="synonym">Cynomolgus monkey</name>
    <dbReference type="NCBI Taxonomy" id="9541"/>
    <lineage>
        <taxon>Eukaryota</taxon>
        <taxon>Metazoa</taxon>
        <taxon>Chordata</taxon>
        <taxon>Craniata</taxon>
        <taxon>Vertebrata</taxon>
        <taxon>Euteleostomi</taxon>
        <taxon>Mammalia</taxon>
        <taxon>Eutheria</taxon>
        <taxon>Euarchontoglires</taxon>
        <taxon>Primates</taxon>
        <taxon>Haplorrhini</taxon>
        <taxon>Catarrhini</taxon>
        <taxon>Cercopithecidae</taxon>
        <taxon>Cercopithecinae</taxon>
        <taxon>Macaca</taxon>
    </lineage>
</organism>
<protein>
    <recommendedName>
        <fullName>Regucalcin</fullName>
        <shortName>RC</shortName>
    </recommendedName>
    <alternativeName>
        <fullName>Gluconolactonase</fullName>
        <shortName>GNL</shortName>
        <ecNumber>3.1.1.17</ecNumber>
    </alternativeName>
    <alternativeName>
        <fullName>Senescence marker protein 30</fullName>
        <shortName>SMP-30</shortName>
    </alternativeName>
</protein>
<name>RGN_MACFA</name>